<reference key="1">
    <citation type="journal article" date="2002" name="Proc. Natl. Acad. Sci. U.S.A.">
        <title>The genome sequence of the facultative intracellular pathogen Brucella melitensis.</title>
        <authorList>
            <person name="DelVecchio V.G."/>
            <person name="Kapatral V."/>
            <person name="Redkar R.J."/>
            <person name="Patra G."/>
            <person name="Mujer C."/>
            <person name="Los T."/>
            <person name="Ivanova N."/>
            <person name="Anderson I."/>
            <person name="Bhattacharyya A."/>
            <person name="Lykidis A."/>
            <person name="Reznik G."/>
            <person name="Jablonski L."/>
            <person name="Larsen N."/>
            <person name="D'Souza M."/>
            <person name="Bernal A."/>
            <person name="Mazur M."/>
            <person name="Goltsman E."/>
            <person name="Selkov E."/>
            <person name="Elzer P.H."/>
            <person name="Hagius S."/>
            <person name="O'Callaghan D."/>
            <person name="Letesson J.-J."/>
            <person name="Haselkorn R."/>
            <person name="Kyrpides N.C."/>
            <person name="Overbeek R."/>
        </authorList>
    </citation>
    <scope>NUCLEOTIDE SEQUENCE [LARGE SCALE GENOMIC DNA]</scope>
    <source>
        <strain>ATCC 23456 / CCUG 17765 / NCTC 10094 / 16M</strain>
    </source>
</reference>
<organism>
    <name type="scientific">Brucella melitensis biotype 1 (strain ATCC 23456 / CCUG 17765 / NCTC 10094 / 16M)</name>
    <dbReference type="NCBI Taxonomy" id="224914"/>
    <lineage>
        <taxon>Bacteria</taxon>
        <taxon>Pseudomonadati</taxon>
        <taxon>Pseudomonadota</taxon>
        <taxon>Alphaproteobacteria</taxon>
        <taxon>Hyphomicrobiales</taxon>
        <taxon>Brucellaceae</taxon>
        <taxon>Brucella/Ochrobactrum group</taxon>
        <taxon>Brucella</taxon>
    </lineage>
</organism>
<proteinExistence type="inferred from homology"/>
<comment type="function">
    <text evidence="1">Involved in mRNA degradation. Catalyzes the phosphorolysis of single-stranded polyribonucleotides processively in the 3'- to 5'-direction.</text>
</comment>
<comment type="catalytic activity">
    <reaction evidence="1">
        <text>RNA(n+1) + phosphate = RNA(n) + a ribonucleoside 5'-diphosphate</text>
        <dbReference type="Rhea" id="RHEA:22096"/>
        <dbReference type="Rhea" id="RHEA-COMP:14527"/>
        <dbReference type="Rhea" id="RHEA-COMP:17342"/>
        <dbReference type="ChEBI" id="CHEBI:43474"/>
        <dbReference type="ChEBI" id="CHEBI:57930"/>
        <dbReference type="ChEBI" id="CHEBI:140395"/>
        <dbReference type="EC" id="2.7.7.8"/>
    </reaction>
</comment>
<comment type="cofactor">
    <cofactor evidence="1">
        <name>Mg(2+)</name>
        <dbReference type="ChEBI" id="CHEBI:18420"/>
    </cofactor>
</comment>
<comment type="subcellular location">
    <subcellularLocation>
        <location evidence="1">Cytoplasm</location>
    </subcellularLocation>
</comment>
<comment type="similarity">
    <text evidence="1">Belongs to the polyribonucleotide nucleotidyltransferase family.</text>
</comment>
<name>PNP_BRUME</name>
<evidence type="ECO:0000255" key="1">
    <source>
        <dbReference type="HAMAP-Rule" id="MF_01595"/>
    </source>
</evidence>
<accession>Q8YEB7</accession>
<sequence length="714" mass="77731">MFNTHKVEIEWGGRPLTLETGKIARQADGAVLATYGETAVLATVVSAKEPKPGQDFFPLTVNYQEKTYAAGKIPGGYFKREGRPSENETLVSRLIDRPIRPLFVDGYKNDTQVVITVLQHDLENNPDILSMVAASAALTISGVPFMGPISGARVGYIDGEYVLNPNIDEMPESKLDLVVAGTSEAVLMVESEAQELPEDVMLGAVMFGHKSFQPVIDAIIKLAEVAAKEPRDFQPEDLSELEAKVLAVVENDLREAYKITEKQARYAAVDAAKAKAEEHFFPEGVEETEMSAEQFATIFKHLQAKIVRWNILDTGNRIDGRDLSTVRPIVSEVGILPRTHGSALFTRGETQAIVVATLGTGEDEQMIDALTGTYKESFMLHYNFPPYSVGETGRMGSPGRREIGHGKLAWRAIHPMLPAAEQFPYTIRAVSEITESNGSSSMATVCGTSLALMDAGVPIVRPVAGIAMGLIKEGERFAVLSDILGDEDHLGDMDFKVAGTEFGITSLQMDIKIDGITEEIMKVALEQAKGGRVHILGEMAKAISSSRAELGEFAPRIEVMNIPTDKIRDVIGSGGKVIREIVEKTGAKINIEDDGTVKIASSNGKEIEAAKKWIHSIVAEPEVGEIYEGTVVKTADFGAFVNFFGPRDGLVHISQLAADRVAKTTDVVKEGQKVWVKLMGFDERGKVRLSMKVVDQETGKEIVAEKKKEEVDAE</sequence>
<gene>
    <name evidence="1" type="primary">pnp</name>
    <name type="ordered locus">BMEI1961</name>
</gene>
<protein>
    <recommendedName>
        <fullName evidence="1">Polyribonucleotide nucleotidyltransferase</fullName>
        <ecNumber evidence="1">2.7.7.8</ecNumber>
    </recommendedName>
    <alternativeName>
        <fullName evidence="1">Polynucleotide phosphorylase</fullName>
        <shortName evidence="1">PNPase</shortName>
    </alternativeName>
</protein>
<keyword id="KW-0963">Cytoplasm</keyword>
<keyword id="KW-0460">Magnesium</keyword>
<keyword id="KW-0479">Metal-binding</keyword>
<keyword id="KW-0548">Nucleotidyltransferase</keyword>
<keyword id="KW-0694">RNA-binding</keyword>
<keyword id="KW-0808">Transferase</keyword>
<feature type="chain" id="PRO_0000329547" description="Polyribonucleotide nucleotidyltransferase">
    <location>
        <begin position="1"/>
        <end position="714"/>
    </location>
</feature>
<feature type="domain" description="KH" evidence="1">
    <location>
        <begin position="555"/>
        <end position="614"/>
    </location>
</feature>
<feature type="domain" description="S1 motif" evidence="1">
    <location>
        <begin position="624"/>
        <end position="692"/>
    </location>
</feature>
<feature type="binding site" evidence="1">
    <location>
        <position position="488"/>
    </location>
    <ligand>
        <name>Mg(2+)</name>
        <dbReference type="ChEBI" id="CHEBI:18420"/>
    </ligand>
</feature>
<feature type="binding site" evidence="1">
    <location>
        <position position="494"/>
    </location>
    <ligand>
        <name>Mg(2+)</name>
        <dbReference type="ChEBI" id="CHEBI:18420"/>
    </ligand>
</feature>
<dbReference type="EC" id="2.7.7.8" evidence="1"/>
<dbReference type="EMBL" id="AE008917">
    <property type="protein sequence ID" value="AAL53142.1"/>
    <property type="molecule type" value="Genomic_DNA"/>
</dbReference>
<dbReference type="PIR" id="AC3497">
    <property type="entry name" value="AC3497"/>
</dbReference>
<dbReference type="RefSeq" id="WP_004684585.1">
    <property type="nucleotide sequence ID" value="NZ_GG703778.1"/>
</dbReference>
<dbReference type="SMR" id="Q8YEB7"/>
<dbReference type="GeneID" id="29594852"/>
<dbReference type="KEGG" id="bme:BMEI1961"/>
<dbReference type="KEGG" id="bmel:DK63_1529"/>
<dbReference type="PATRIC" id="fig|224914.52.peg.1615"/>
<dbReference type="eggNOG" id="COG1185">
    <property type="taxonomic scope" value="Bacteria"/>
</dbReference>
<dbReference type="PhylomeDB" id="Q8YEB7"/>
<dbReference type="Proteomes" id="UP000000419">
    <property type="component" value="Chromosome I"/>
</dbReference>
<dbReference type="GO" id="GO:0005829">
    <property type="term" value="C:cytosol"/>
    <property type="evidence" value="ECO:0007669"/>
    <property type="project" value="TreeGrafter"/>
</dbReference>
<dbReference type="GO" id="GO:0000175">
    <property type="term" value="F:3'-5'-RNA exonuclease activity"/>
    <property type="evidence" value="ECO:0007669"/>
    <property type="project" value="TreeGrafter"/>
</dbReference>
<dbReference type="GO" id="GO:0000287">
    <property type="term" value="F:magnesium ion binding"/>
    <property type="evidence" value="ECO:0007669"/>
    <property type="project" value="UniProtKB-UniRule"/>
</dbReference>
<dbReference type="GO" id="GO:0004654">
    <property type="term" value="F:polyribonucleotide nucleotidyltransferase activity"/>
    <property type="evidence" value="ECO:0007669"/>
    <property type="project" value="UniProtKB-UniRule"/>
</dbReference>
<dbReference type="GO" id="GO:0003723">
    <property type="term" value="F:RNA binding"/>
    <property type="evidence" value="ECO:0007669"/>
    <property type="project" value="UniProtKB-UniRule"/>
</dbReference>
<dbReference type="GO" id="GO:0006402">
    <property type="term" value="P:mRNA catabolic process"/>
    <property type="evidence" value="ECO:0007669"/>
    <property type="project" value="UniProtKB-UniRule"/>
</dbReference>
<dbReference type="GO" id="GO:0006396">
    <property type="term" value="P:RNA processing"/>
    <property type="evidence" value="ECO:0007669"/>
    <property type="project" value="InterPro"/>
</dbReference>
<dbReference type="CDD" id="cd02393">
    <property type="entry name" value="KH-I_PNPase"/>
    <property type="match status" value="1"/>
</dbReference>
<dbReference type="CDD" id="cd11363">
    <property type="entry name" value="RNase_PH_PNPase_1"/>
    <property type="match status" value="1"/>
</dbReference>
<dbReference type="CDD" id="cd11364">
    <property type="entry name" value="RNase_PH_PNPase_2"/>
    <property type="match status" value="1"/>
</dbReference>
<dbReference type="CDD" id="cd04472">
    <property type="entry name" value="S1_PNPase"/>
    <property type="match status" value="1"/>
</dbReference>
<dbReference type="FunFam" id="2.40.50.140:FF:000107">
    <property type="entry name" value="Polyribonucleotide nucleotidyltransferase"/>
    <property type="match status" value="1"/>
</dbReference>
<dbReference type="FunFam" id="3.30.1370.10:FF:000001">
    <property type="entry name" value="Polyribonucleotide nucleotidyltransferase"/>
    <property type="match status" value="1"/>
</dbReference>
<dbReference type="FunFam" id="3.30.230.70:FF:000001">
    <property type="entry name" value="Polyribonucleotide nucleotidyltransferase"/>
    <property type="match status" value="1"/>
</dbReference>
<dbReference type="FunFam" id="3.30.230.70:FF:000002">
    <property type="entry name" value="Polyribonucleotide nucleotidyltransferase"/>
    <property type="match status" value="1"/>
</dbReference>
<dbReference type="Gene3D" id="3.30.230.70">
    <property type="entry name" value="GHMP Kinase, N-terminal domain"/>
    <property type="match status" value="2"/>
</dbReference>
<dbReference type="Gene3D" id="3.30.1370.10">
    <property type="entry name" value="K Homology domain, type 1"/>
    <property type="match status" value="1"/>
</dbReference>
<dbReference type="Gene3D" id="2.40.50.140">
    <property type="entry name" value="Nucleic acid-binding proteins"/>
    <property type="match status" value="1"/>
</dbReference>
<dbReference type="HAMAP" id="MF_01595">
    <property type="entry name" value="PNPase"/>
    <property type="match status" value="1"/>
</dbReference>
<dbReference type="InterPro" id="IPR001247">
    <property type="entry name" value="ExoRNase_PH_dom1"/>
</dbReference>
<dbReference type="InterPro" id="IPR015847">
    <property type="entry name" value="ExoRNase_PH_dom2"/>
</dbReference>
<dbReference type="InterPro" id="IPR036345">
    <property type="entry name" value="ExoRNase_PH_dom2_sf"/>
</dbReference>
<dbReference type="InterPro" id="IPR004087">
    <property type="entry name" value="KH_dom"/>
</dbReference>
<dbReference type="InterPro" id="IPR004088">
    <property type="entry name" value="KH_dom_type_1"/>
</dbReference>
<dbReference type="InterPro" id="IPR036612">
    <property type="entry name" value="KH_dom_type_1_sf"/>
</dbReference>
<dbReference type="InterPro" id="IPR012340">
    <property type="entry name" value="NA-bd_OB-fold"/>
</dbReference>
<dbReference type="InterPro" id="IPR012162">
    <property type="entry name" value="PNPase"/>
</dbReference>
<dbReference type="InterPro" id="IPR027408">
    <property type="entry name" value="PNPase/RNase_PH_dom_sf"/>
</dbReference>
<dbReference type="InterPro" id="IPR015848">
    <property type="entry name" value="PNPase_PH_RNA-bd_bac/org-type"/>
</dbReference>
<dbReference type="InterPro" id="IPR020568">
    <property type="entry name" value="Ribosomal_Su5_D2-typ_SF"/>
</dbReference>
<dbReference type="InterPro" id="IPR003029">
    <property type="entry name" value="S1_domain"/>
</dbReference>
<dbReference type="NCBIfam" id="TIGR03591">
    <property type="entry name" value="polynuc_phos"/>
    <property type="match status" value="1"/>
</dbReference>
<dbReference type="NCBIfam" id="NF008805">
    <property type="entry name" value="PRK11824.1"/>
    <property type="match status" value="1"/>
</dbReference>
<dbReference type="PANTHER" id="PTHR11252">
    <property type="entry name" value="POLYRIBONUCLEOTIDE NUCLEOTIDYLTRANSFERASE"/>
    <property type="match status" value="1"/>
</dbReference>
<dbReference type="PANTHER" id="PTHR11252:SF0">
    <property type="entry name" value="POLYRIBONUCLEOTIDE NUCLEOTIDYLTRANSFERASE 1, MITOCHONDRIAL"/>
    <property type="match status" value="1"/>
</dbReference>
<dbReference type="Pfam" id="PF00013">
    <property type="entry name" value="KH_1"/>
    <property type="match status" value="1"/>
</dbReference>
<dbReference type="Pfam" id="PF03726">
    <property type="entry name" value="PNPase"/>
    <property type="match status" value="1"/>
</dbReference>
<dbReference type="Pfam" id="PF01138">
    <property type="entry name" value="RNase_PH"/>
    <property type="match status" value="2"/>
</dbReference>
<dbReference type="Pfam" id="PF03725">
    <property type="entry name" value="RNase_PH_C"/>
    <property type="match status" value="2"/>
</dbReference>
<dbReference type="Pfam" id="PF00575">
    <property type="entry name" value="S1"/>
    <property type="match status" value="1"/>
</dbReference>
<dbReference type="PIRSF" id="PIRSF005499">
    <property type="entry name" value="PNPase"/>
    <property type="match status" value="1"/>
</dbReference>
<dbReference type="SMART" id="SM00322">
    <property type="entry name" value="KH"/>
    <property type="match status" value="1"/>
</dbReference>
<dbReference type="SMART" id="SM00316">
    <property type="entry name" value="S1"/>
    <property type="match status" value="1"/>
</dbReference>
<dbReference type="SUPFAM" id="SSF54791">
    <property type="entry name" value="Eukaryotic type KH-domain (KH-domain type I)"/>
    <property type="match status" value="1"/>
</dbReference>
<dbReference type="SUPFAM" id="SSF50249">
    <property type="entry name" value="Nucleic acid-binding proteins"/>
    <property type="match status" value="1"/>
</dbReference>
<dbReference type="SUPFAM" id="SSF55666">
    <property type="entry name" value="Ribonuclease PH domain 2-like"/>
    <property type="match status" value="2"/>
</dbReference>
<dbReference type="SUPFAM" id="SSF54211">
    <property type="entry name" value="Ribosomal protein S5 domain 2-like"/>
    <property type="match status" value="2"/>
</dbReference>
<dbReference type="PROSITE" id="PS50084">
    <property type="entry name" value="KH_TYPE_1"/>
    <property type="match status" value="1"/>
</dbReference>
<dbReference type="PROSITE" id="PS50126">
    <property type="entry name" value="S1"/>
    <property type="match status" value="1"/>
</dbReference>